<comment type="function">
    <text evidence="1">Catalyzes a trans-dehydration via an enolate intermediate.</text>
</comment>
<comment type="catalytic activity">
    <reaction evidence="1">
        <text>3-dehydroquinate = 3-dehydroshikimate + H2O</text>
        <dbReference type="Rhea" id="RHEA:21096"/>
        <dbReference type="ChEBI" id="CHEBI:15377"/>
        <dbReference type="ChEBI" id="CHEBI:16630"/>
        <dbReference type="ChEBI" id="CHEBI:32364"/>
        <dbReference type="EC" id="4.2.1.10"/>
    </reaction>
</comment>
<comment type="pathway">
    <text evidence="1">Metabolic intermediate biosynthesis; chorismate biosynthesis; chorismate from D-erythrose 4-phosphate and phosphoenolpyruvate: step 3/7.</text>
</comment>
<comment type="subunit">
    <text evidence="1">Homododecamer.</text>
</comment>
<comment type="similarity">
    <text evidence="1">Belongs to the type-II 3-dehydroquinase family.</text>
</comment>
<keyword id="KW-0028">Amino-acid biosynthesis</keyword>
<keyword id="KW-0057">Aromatic amino acid biosynthesis</keyword>
<keyword id="KW-0456">Lyase</keyword>
<evidence type="ECO:0000255" key="1">
    <source>
        <dbReference type="HAMAP-Rule" id="MF_00169"/>
    </source>
</evidence>
<protein>
    <recommendedName>
        <fullName evidence="1">3-dehydroquinate dehydratase</fullName>
        <shortName evidence="1">3-dehydroquinase</shortName>
        <ecNumber evidence="1">4.2.1.10</ecNumber>
    </recommendedName>
    <alternativeName>
        <fullName evidence="1">Type II DHQase</fullName>
    </alternativeName>
</protein>
<dbReference type="EC" id="4.2.1.10" evidence="1"/>
<dbReference type="EMBL" id="CP000578">
    <property type="protein sequence ID" value="ABN78122.1"/>
    <property type="molecule type" value="Genomic_DNA"/>
</dbReference>
<dbReference type="RefSeq" id="WP_009562674.1">
    <property type="nucleotide sequence ID" value="NC_009050.1"/>
</dbReference>
<dbReference type="SMR" id="A3PP56"/>
<dbReference type="KEGG" id="rsh:Rsph17029_3022"/>
<dbReference type="HOGENOM" id="CLU_090968_2_0_5"/>
<dbReference type="UniPathway" id="UPA00053">
    <property type="reaction ID" value="UER00086"/>
</dbReference>
<dbReference type="GO" id="GO:0003855">
    <property type="term" value="F:3-dehydroquinate dehydratase activity"/>
    <property type="evidence" value="ECO:0007669"/>
    <property type="project" value="UniProtKB-UniRule"/>
</dbReference>
<dbReference type="GO" id="GO:0008652">
    <property type="term" value="P:amino acid biosynthetic process"/>
    <property type="evidence" value="ECO:0007669"/>
    <property type="project" value="UniProtKB-KW"/>
</dbReference>
<dbReference type="GO" id="GO:0009073">
    <property type="term" value="P:aromatic amino acid family biosynthetic process"/>
    <property type="evidence" value="ECO:0007669"/>
    <property type="project" value="UniProtKB-KW"/>
</dbReference>
<dbReference type="GO" id="GO:0009423">
    <property type="term" value="P:chorismate biosynthetic process"/>
    <property type="evidence" value="ECO:0007669"/>
    <property type="project" value="UniProtKB-UniRule"/>
</dbReference>
<dbReference type="GO" id="GO:0019631">
    <property type="term" value="P:quinate catabolic process"/>
    <property type="evidence" value="ECO:0007669"/>
    <property type="project" value="TreeGrafter"/>
</dbReference>
<dbReference type="CDD" id="cd00466">
    <property type="entry name" value="DHQase_II"/>
    <property type="match status" value="1"/>
</dbReference>
<dbReference type="Gene3D" id="3.40.50.9100">
    <property type="entry name" value="Dehydroquinase, class II"/>
    <property type="match status" value="1"/>
</dbReference>
<dbReference type="HAMAP" id="MF_00169">
    <property type="entry name" value="AroQ"/>
    <property type="match status" value="1"/>
</dbReference>
<dbReference type="InterPro" id="IPR001874">
    <property type="entry name" value="DHquinase_II"/>
</dbReference>
<dbReference type="InterPro" id="IPR018509">
    <property type="entry name" value="DHquinase_II_CS"/>
</dbReference>
<dbReference type="InterPro" id="IPR036441">
    <property type="entry name" value="DHquinase_II_sf"/>
</dbReference>
<dbReference type="NCBIfam" id="TIGR01088">
    <property type="entry name" value="aroQ"/>
    <property type="match status" value="1"/>
</dbReference>
<dbReference type="NCBIfam" id="NF003805">
    <property type="entry name" value="PRK05395.1-2"/>
    <property type="match status" value="1"/>
</dbReference>
<dbReference type="NCBIfam" id="NF003806">
    <property type="entry name" value="PRK05395.1-3"/>
    <property type="match status" value="1"/>
</dbReference>
<dbReference type="NCBIfam" id="NF003807">
    <property type="entry name" value="PRK05395.1-4"/>
    <property type="match status" value="1"/>
</dbReference>
<dbReference type="PANTHER" id="PTHR21272">
    <property type="entry name" value="CATABOLIC 3-DEHYDROQUINASE"/>
    <property type="match status" value="1"/>
</dbReference>
<dbReference type="PANTHER" id="PTHR21272:SF3">
    <property type="entry name" value="CATABOLIC 3-DEHYDROQUINASE"/>
    <property type="match status" value="1"/>
</dbReference>
<dbReference type="Pfam" id="PF01220">
    <property type="entry name" value="DHquinase_II"/>
    <property type="match status" value="1"/>
</dbReference>
<dbReference type="PIRSF" id="PIRSF001399">
    <property type="entry name" value="DHquinase_II"/>
    <property type="match status" value="1"/>
</dbReference>
<dbReference type="SUPFAM" id="SSF52304">
    <property type="entry name" value="Type II 3-dehydroquinate dehydratase"/>
    <property type="match status" value="1"/>
</dbReference>
<dbReference type="PROSITE" id="PS01029">
    <property type="entry name" value="DEHYDROQUINASE_II"/>
    <property type="match status" value="1"/>
</dbReference>
<organism>
    <name type="scientific">Cereibacter sphaeroides (strain ATCC 17029 / ATH 2.4.9)</name>
    <name type="common">Rhodobacter sphaeroides</name>
    <dbReference type="NCBI Taxonomy" id="349101"/>
    <lineage>
        <taxon>Bacteria</taxon>
        <taxon>Pseudomonadati</taxon>
        <taxon>Pseudomonadota</taxon>
        <taxon>Alphaproteobacteria</taxon>
        <taxon>Rhodobacterales</taxon>
        <taxon>Paracoccaceae</taxon>
        <taxon>Cereibacter</taxon>
    </lineage>
</organism>
<proteinExistence type="inferred from homology"/>
<gene>
    <name evidence="1" type="primary">aroQ</name>
    <name type="ordered locus">Rsph17029_3022</name>
</gene>
<accession>A3PP56</accession>
<feature type="chain" id="PRO_1000023506" description="3-dehydroquinate dehydratase">
    <location>
        <begin position="1"/>
        <end position="147"/>
    </location>
</feature>
<feature type="active site" description="Proton acceptor" evidence="1">
    <location>
        <position position="24"/>
    </location>
</feature>
<feature type="active site" description="Proton donor" evidence="1">
    <location>
        <position position="101"/>
    </location>
</feature>
<feature type="binding site" evidence="1">
    <location>
        <position position="75"/>
    </location>
    <ligand>
        <name>substrate</name>
    </ligand>
</feature>
<feature type="binding site" evidence="1">
    <location>
        <position position="81"/>
    </location>
    <ligand>
        <name>substrate</name>
    </ligand>
</feature>
<feature type="binding site" evidence="1">
    <location>
        <position position="88"/>
    </location>
    <ligand>
        <name>substrate</name>
    </ligand>
</feature>
<feature type="binding site" evidence="1">
    <location>
        <begin position="102"/>
        <end position="103"/>
    </location>
    <ligand>
        <name>substrate</name>
    </ligand>
</feature>
<feature type="binding site" evidence="1">
    <location>
        <position position="112"/>
    </location>
    <ligand>
        <name>substrate</name>
    </ligand>
</feature>
<feature type="site" description="Transition state stabilizer" evidence="1">
    <location>
        <position position="19"/>
    </location>
</feature>
<sequence>MTTTIYILNGPNLNLLGQRQPEIYGHETLADVERRCAEVAAEKGFSVRLFQSNHEGTIIDQIHEARQAACGIVINPAAYTHTSVAILDALHAFEGPVIECHISNVHKRESFRHHSYVSLRADGVLAGFGIEGYELAVRRICSLCAGG</sequence>
<name>AROQ_CERS1</name>
<reference key="1">
    <citation type="submission" date="2007-02" db="EMBL/GenBank/DDBJ databases">
        <title>Complete sequence of chromosome 2 of Rhodobacter sphaeroides ATCC 17029.</title>
        <authorList>
            <person name="Copeland A."/>
            <person name="Lucas S."/>
            <person name="Lapidus A."/>
            <person name="Barry K."/>
            <person name="Detter J.C."/>
            <person name="Glavina del Rio T."/>
            <person name="Hammon N."/>
            <person name="Israni S."/>
            <person name="Dalin E."/>
            <person name="Tice H."/>
            <person name="Pitluck S."/>
            <person name="Kiss H."/>
            <person name="Brettin T."/>
            <person name="Bruce D."/>
            <person name="Han C."/>
            <person name="Tapia R."/>
            <person name="Gilna P."/>
            <person name="Schmutz J."/>
            <person name="Larimer F."/>
            <person name="Land M."/>
            <person name="Hauser L."/>
            <person name="Kyrpides N."/>
            <person name="Mikhailova N."/>
            <person name="Richardson P."/>
            <person name="Mackenzie C."/>
            <person name="Choudhary M."/>
            <person name="Donohue T.J."/>
            <person name="Kaplan S."/>
        </authorList>
    </citation>
    <scope>NUCLEOTIDE SEQUENCE [LARGE SCALE GENOMIC DNA]</scope>
    <source>
        <strain>ATCC 17029 / ATH 2.4.9</strain>
    </source>
</reference>